<evidence type="ECO:0000256" key="1">
    <source>
        <dbReference type="SAM" id="MobiDB-lite"/>
    </source>
</evidence>
<evidence type="ECO:0000269" key="2">
    <source>
    </source>
</evidence>
<evidence type="ECO:0000269" key="3">
    <source>
    </source>
</evidence>
<evidence type="ECO:0000269" key="4">
    <source>
    </source>
</evidence>
<evidence type="ECO:0000269" key="5">
    <source>
    </source>
</evidence>
<evidence type="ECO:0000269" key="6">
    <source>
    </source>
</evidence>
<evidence type="ECO:0000269" key="7">
    <source>
    </source>
</evidence>
<evidence type="ECO:0000269" key="8">
    <source>
    </source>
</evidence>
<evidence type="ECO:0000269" key="9">
    <source>
    </source>
</evidence>
<evidence type="ECO:0000269" key="10">
    <source>
    </source>
</evidence>
<evidence type="ECO:0000269" key="11">
    <source>
    </source>
</evidence>
<evidence type="ECO:0000269" key="12">
    <source>
    </source>
</evidence>
<evidence type="ECO:0000269" key="13">
    <source>
    </source>
</evidence>
<evidence type="ECO:0000305" key="14">
    <source>
    </source>
</evidence>
<evidence type="ECO:0007744" key="15">
    <source>
    </source>
</evidence>
<evidence type="ECO:0007744" key="16">
    <source>
    </source>
</evidence>
<evidence type="ECO:0007744" key="17">
    <source>
    </source>
</evidence>
<evidence type="ECO:0007829" key="18">
    <source>
        <dbReference type="PDB" id="5OWU"/>
    </source>
</evidence>
<proteinExistence type="evidence at protein level"/>
<organism>
    <name type="scientific">Saccharomyces cerevisiae (strain ATCC 204508 / S288c)</name>
    <name type="common">Baker's yeast</name>
    <dbReference type="NCBI Taxonomy" id="559292"/>
    <lineage>
        <taxon>Eukaryota</taxon>
        <taxon>Fungi</taxon>
        <taxon>Dikarya</taxon>
        <taxon>Ascomycota</taxon>
        <taxon>Saccharomycotina</taxon>
        <taxon>Saccharomycetes</taxon>
        <taxon>Saccharomycetales</taxon>
        <taxon>Saccharomycetaceae</taxon>
        <taxon>Saccharomyces</taxon>
    </lineage>
</organism>
<dbReference type="EMBL" id="M33632">
    <property type="protein sequence ID" value="AAA34822.1"/>
    <property type="molecule type" value="Genomic_DNA"/>
</dbReference>
<dbReference type="EMBL" id="X94335">
    <property type="protein sequence ID" value="CAA64020.1"/>
    <property type="molecule type" value="Genomic_DNA"/>
</dbReference>
<dbReference type="EMBL" id="Z75006">
    <property type="protein sequence ID" value="CAA99295.1"/>
    <property type="molecule type" value="Genomic_DNA"/>
</dbReference>
<dbReference type="EMBL" id="BK006948">
    <property type="protein sequence ID" value="DAA10875.1"/>
    <property type="molecule type" value="Genomic_DNA"/>
</dbReference>
<dbReference type="PIR" id="A35622">
    <property type="entry name" value="A35622"/>
</dbReference>
<dbReference type="RefSeq" id="NP_014741.1">
    <property type="nucleotide sequence ID" value="NM_001183517.1"/>
</dbReference>
<dbReference type="PDB" id="4C31">
    <property type="method" value="X-ray"/>
    <property type="resolution" value="3.00 A"/>
    <property type="chains" value="C/F/X/Y=322-355"/>
</dbReference>
<dbReference type="PDB" id="4MBE">
    <property type="method" value="X-ray"/>
    <property type="resolution" value="2.61 A"/>
    <property type="chains" value="G/H/X/Y=316-340"/>
</dbReference>
<dbReference type="PDB" id="5OWU">
    <property type="method" value="X-ray"/>
    <property type="resolution" value="2.00 A"/>
    <property type="chains" value="B=1-1076"/>
</dbReference>
<dbReference type="PDBsum" id="4C31"/>
<dbReference type="PDBsum" id="4MBE"/>
<dbReference type="PDBsum" id="5OWU"/>
<dbReference type="SMR" id="P20676"/>
<dbReference type="BioGRID" id="34496">
    <property type="interactions" value="109"/>
</dbReference>
<dbReference type="ComplexPortal" id="CPX-824">
    <property type="entry name" value="Nuclear pore complex"/>
</dbReference>
<dbReference type="DIP" id="DIP-81N"/>
<dbReference type="FunCoup" id="P20676">
    <property type="interactions" value="288"/>
</dbReference>
<dbReference type="IntAct" id="P20676">
    <property type="interactions" value="49"/>
</dbReference>
<dbReference type="MINT" id="P20676"/>
<dbReference type="STRING" id="4932.YOR098C"/>
<dbReference type="TCDB" id="1.I.1.1.1">
    <property type="family name" value="the nuclear pore complex (npc) family"/>
</dbReference>
<dbReference type="GlyGen" id="P20676">
    <property type="glycosylation" value="6 sites, 1 O-linked glycan (4 sites)"/>
</dbReference>
<dbReference type="iPTMnet" id="P20676"/>
<dbReference type="PaxDb" id="4932-YOR098C"/>
<dbReference type="PeptideAtlas" id="P20676"/>
<dbReference type="EnsemblFungi" id="YOR098C_mRNA">
    <property type="protein sequence ID" value="YOR098C"/>
    <property type="gene ID" value="YOR098C"/>
</dbReference>
<dbReference type="GeneID" id="854265"/>
<dbReference type="KEGG" id="sce:YOR098C"/>
<dbReference type="AGR" id="SGD:S000005624"/>
<dbReference type="SGD" id="S000005624">
    <property type="gene designation" value="NUP1"/>
</dbReference>
<dbReference type="VEuPathDB" id="FungiDB:YOR098C"/>
<dbReference type="eggNOG" id="KOG4719">
    <property type="taxonomic scope" value="Eukaryota"/>
</dbReference>
<dbReference type="HOGENOM" id="CLU_316464_0_0_1"/>
<dbReference type="InParanoid" id="P20676"/>
<dbReference type="OMA" id="YGTENTE"/>
<dbReference type="OrthoDB" id="4070102at2759"/>
<dbReference type="BioCyc" id="YEAST:G3O-33631-MONOMER"/>
<dbReference type="Reactome" id="R-SCE-159236">
    <property type="pathway name" value="Transport of Mature mRNA derived from an Intron-Containing Transcript"/>
</dbReference>
<dbReference type="Reactome" id="R-SCE-3371453">
    <property type="pathway name" value="Regulation of HSF1-mediated heat shock response"/>
</dbReference>
<dbReference type="Reactome" id="R-SCE-4085377">
    <property type="pathway name" value="SUMOylation of SUMOylation proteins"/>
</dbReference>
<dbReference type="Reactome" id="R-SCE-4551638">
    <property type="pathway name" value="SUMOylation of chromatin organization proteins"/>
</dbReference>
<dbReference type="Reactome" id="R-SCE-4570464">
    <property type="pathway name" value="SUMOylation of RNA binding proteins"/>
</dbReference>
<dbReference type="BioGRID-ORCS" id="854265">
    <property type="hits" value="9 hits in 10 CRISPR screens"/>
</dbReference>
<dbReference type="EvolutionaryTrace" id="P20676"/>
<dbReference type="PRO" id="PR:P20676"/>
<dbReference type="Proteomes" id="UP000002311">
    <property type="component" value="Chromosome XV"/>
</dbReference>
<dbReference type="RNAct" id="P20676">
    <property type="molecule type" value="protein"/>
</dbReference>
<dbReference type="GO" id="GO:0005635">
    <property type="term" value="C:nuclear envelope"/>
    <property type="evidence" value="ECO:0000303"/>
    <property type="project" value="ComplexPortal"/>
</dbReference>
<dbReference type="GO" id="GO:0031965">
    <property type="term" value="C:nuclear membrane"/>
    <property type="evidence" value="ECO:0007669"/>
    <property type="project" value="UniProtKB-SubCell"/>
</dbReference>
<dbReference type="GO" id="GO:0005643">
    <property type="term" value="C:nuclear pore"/>
    <property type="evidence" value="ECO:0000314"/>
    <property type="project" value="SGD"/>
</dbReference>
<dbReference type="GO" id="GO:0044613">
    <property type="term" value="C:nuclear pore central transport channel"/>
    <property type="evidence" value="ECO:0000314"/>
    <property type="project" value="SGD"/>
</dbReference>
<dbReference type="GO" id="GO:0044615">
    <property type="term" value="C:nuclear pore nuclear basket"/>
    <property type="evidence" value="ECO:0000314"/>
    <property type="project" value="SGD"/>
</dbReference>
<dbReference type="GO" id="GO:0008139">
    <property type="term" value="F:nuclear localization sequence binding"/>
    <property type="evidence" value="ECO:0000318"/>
    <property type="project" value="GO_Central"/>
</dbReference>
<dbReference type="GO" id="GO:0017056">
    <property type="term" value="F:structural constituent of nuclear pore"/>
    <property type="evidence" value="ECO:0000315"/>
    <property type="project" value="SGD"/>
</dbReference>
<dbReference type="GO" id="GO:0006607">
    <property type="term" value="P:NLS-bearing protein import into nucleus"/>
    <property type="evidence" value="ECO:0000315"/>
    <property type="project" value="SGD"/>
</dbReference>
<dbReference type="GO" id="GO:0006913">
    <property type="term" value="P:nucleocytoplasmic transport"/>
    <property type="evidence" value="ECO:0000303"/>
    <property type="project" value="ComplexPortal"/>
</dbReference>
<dbReference type="GO" id="GO:0016973">
    <property type="term" value="P:poly(A)+ mRNA export from nucleus"/>
    <property type="evidence" value="ECO:0000315"/>
    <property type="project" value="SGD"/>
</dbReference>
<dbReference type="GO" id="GO:0006606">
    <property type="term" value="P:protein import into nucleus"/>
    <property type="evidence" value="ECO:0000315"/>
    <property type="project" value="SGD"/>
</dbReference>
<dbReference type="GO" id="GO:0000055">
    <property type="term" value="P:ribosomal large subunit export from nucleus"/>
    <property type="evidence" value="ECO:0000315"/>
    <property type="project" value="SGD"/>
</dbReference>
<dbReference type="GO" id="GO:0006405">
    <property type="term" value="P:RNA export from nucleus"/>
    <property type="evidence" value="ECO:0000318"/>
    <property type="project" value="GO_Central"/>
</dbReference>
<dbReference type="GO" id="GO:0000972">
    <property type="term" value="P:transcription-dependent tethering of RNA polymerase II gene DNA at nuclear periphery"/>
    <property type="evidence" value="ECO:0000315"/>
    <property type="project" value="SGD"/>
</dbReference>
<dbReference type="DisProt" id="DP01075"/>
<dbReference type="IDEAL" id="IID50271"/>
<keyword id="KW-0002">3D-structure</keyword>
<keyword id="KW-0007">Acetylation</keyword>
<keyword id="KW-0472">Membrane</keyword>
<keyword id="KW-0509">mRNA transport</keyword>
<keyword id="KW-0906">Nuclear pore complex</keyword>
<keyword id="KW-0539">Nucleus</keyword>
<keyword id="KW-0597">Phosphoprotein</keyword>
<keyword id="KW-0653">Protein transport</keyword>
<keyword id="KW-1185">Reference proteome</keyword>
<keyword id="KW-0677">Repeat</keyword>
<keyword id="KW-0811">Translocation</keyword>
<keyword id="KW-0813">Transport</keyword>
<reference key="1">
    <citation type="journal article" date="1990" name="Cell">
        <title>The NUP1 gene encodes an essential component of the yeast nuclear pore complex.</title>
        <authorList>
            <person name="Davis L.I."/>
            <person name="Fink G.R."/>
        </authorList>
    </citation>
    <scope>NUCLEOTIDE SEQUENCE [GENOMIC DNA]</scope>
</reference>
<reference key="2">
    <citation type="journal article" date="1997" name="Yeast">
        <title>DNA sequencing and analysis of 130 kb from yeast chromosome XV.</title>
        <authorList>
            <person name="Voss H."/>
            <person name="Benes V."/>
            <person name="Andrade M.A."/>
            <person name="Valencia A."/>
            <person name="Rechmann S."/>
            <person name="Teodoru C."/>
            <person name="Schwager C."/>
            <person name="Paces V."/>
            <person name="Sander C."/>
            <person name="Ansorge W."/>
        </authorList>
    </citation>
    <scope>NUCLEOTIDE SEQUENCE [GENOMIC DNA]</scope>
</reference>
<reference key="3">
    <citation type="journal article" date="1997" name="Nature">
        <title>The nucleotide sequence of Saccharomyces cerevisiae chromosome XV.</title>
        <authorList>
            <person name="Dujon B."/>
            <person name="Albermann K."/>
            <person name="Aldea M."/>
            <person name="Alexandraki D."/>
            <person name="Ansorge W."/>
            <person name="Arino J."/>
            <person name="Benes V."/>
            <person name="Bohn C."/>
            <person name="Bolotin-Fukuhara M."/>
            <person name="Bordonne R."/>
            <person name="Boyer J."/>
            <person name="Camasses A."/>
            <person name="Casamayor A."/>
            <person name="Casas C."/>
            <person name="Cheret G."/>
            <person name="Cziepluch C."/>
            <person name="Daignan-Fornier B."/>
            <person name="Dang V.-D."/>
            <person name="de Haan M."/>
            <person name="Delius H."/>
            <person name="Durand P."/>
            <person name="Fairhead C."/>
            <person name="Feldmann H."/>
            <person name="Gaillon L."/>
            <person name="Galisson F."/>
            <person name="Gamo F.-J."/>
            <person name="Gancedo C."/>
            <person name="Goffeau A."/>
            <person name="Goulding S.E."/>
            <person name="Grivell L.A."/>
            <person name="Habbig B."/>
            <person name="Hand N.J."/>
            <person name="Hani J."/>
            <person name="Hattenhorst U."/>
            <person name="Hebling U."/>
            <person name="Hernando Y."/>
            <person name="Herrero E."/>
            <person name="Heumann K."/>
            <person name="Hiesel R."/>
            <person name="Hilger F."/>
            <person name="Hofmann B."/>
            <person name="Hollenberg C.P."/>
            <person name="Hughes B."/>
            <person name="Jauniaux J.-C."/>
            <person name="Kalogeropoulos A."/>
            <person name="Katsoulou C."/>
            <person name="Kordes E."/>
            <person name="Lafuente M.J."/>
            <person name="Landt O."/>
            <person name="Louis E.J."/>
            <person name="Maarse A.C."/>
            <person name="Madania A."/>
            <person name="Mannhaupt G."/>
            <person name="Marck C."/>
            <person name="Martin R.P."/>
            <person name="Mewes H.-W."/>
            <person name="Michaux G."/>
            <person name="Paces V."/>
            <person name="Parle-McDermott A.G."/>
            <person name="Pearson B.M."/>
            <person name="Perrin A."/>
            <person name="Pettersson B."/>
            <person name="Poch O."/>
            <person name="Pohl T.M."/>
            <person name="Poirey R."/>
            <person name="Portetelle D."/>
            <person name="Pujol A."/>
            <person name="Purnelle B."/>
            <person name="Ramezani Rad M."/>
            <person name="Rechmann S."/>
            <person name="Schwager C."/>
            <person name="Schweizer M."/>
            <person name="Sor F."/>
            <person name="Sterky F."/>
            <person name="Tarassov I.A."/>
            <person name="Teodoru C."/>
            <person name="Tettelin H."/>
            <person name="Thierry A."/>
            <person name="Tobiasch E."/>
            <person name="Tzermia M."/>
            <person name="Uhlen M."/>
            <person name="Unseld M."/>
            <person name="Valens M."/>
            <person name="Vandenbol M."/>
            <person name="Vetter I."/>
            <person name="Vlcek C."/>
            <person name="Voet M."/>
            <person name="Volckaert G."/>
            <person name="Voss H."/>
            <person name="Wambutt R."/>
            <person name="Wedler H."/>
            <person name="Wiemann S."/>
            <person name="Winsor B."/>
            <person name="Wolfe K.H."/>
            <person name="Zollner A."/>
            <person name="Zumstein E."/>
            <person name="Kleine K."/>
        </authorList>
    </citation>
    <scope>NUCLEOTIDE SEQUENCE [LARGE SCALE GENOMIC DNA]</scope>
    <source>
        <strain>ATCC 204508 / S288c</strain>
    </source>
</reference>
<reference key="4">
    <citation type="journal article" date="2014" name="G3 (Bethesda)">
        <title>The reference genome sequence of Saccharomyces cerevisiae: Then and now.</title>
        <authorList>
            <person name="Engel S.R."/>
            <person name="Dietrich F.S."/>
            <person name="Fisk D.G."/>
            <person name="Binkley G."/>
            <person name="Balakrishnan R."/>
            <person name="Costanzo M.C."/>
            <person name="Dwight S.S."/>
            <person name="Hitz B.C."/>
            <person name="Karra K."/>
            <person name="Nash R.S."/>
            <person name="Weng S."/>
            <person name="Wong E.D."/>
            <person name="Lloyd P."/>
            <person name="Skrzypek M.S."/>
            <person name="Miyasato S.R."/>
            <person name="Simison M."/>
            <person name="Cherry J.M."/>
        </authorList>
    </citation>
    <scope>GENOME REANNOTATION</scope>
    <source>
        <strain>ATCC 204508 / S288c</strain>
    </source>
</reference>
<reference key="5">
    <citation type="journal article" date="1999" name="J. Cell Biol.">
        <title>The karyopherin Kap122p/Pdr6p imports both subunits of the transcription factor IIA into the nucleus.</title>
        <authorList>
            <person name="Titov A.A."/>
            <person name="Blobel G."/>
        </authorList>
    </citation>
    <scope>INTERACTION WITH KAP122</scope>
</reference>
<reference key="6">
    <citation type="journal article" date="2000" name="J. Cell Biol.">
        <title>The yeast nuclear pore complex: composition, architecture, and transport mechanism.</title>
        <authorList>
            <person name="Rout M.P."/>
            <person name="Aitchison J.D."/>
            <person name="Suprapto A."/>
            <person name="Hjertaas K."/>
            <person name="Zhao Y."/>
            <person name="Chait B.T."/>
        </authorList>
    </citation>
    <scope>FUNCTION</scope>
    <scope>IDENTIFICATION IN THE NUCLEAR PORE COMPLEX</scope>
    <scope>SUBCELLULAR LOCATION</scope>
</reference>
<reference key="7">
    <citation type="journal article" date="2000" name="Mol. Cell. Biol.">
        <title>Nup2p, a yeast nucleoporin, functions in bidirectional transport of importin alpha.</title>
        <authorList>
            <person name="Solsbacher J."/>
            <person name="Maurer P."/>
            <person name="Vogel F."/>
            <person name="Schlenstedt G."/>
        </authorList>
    </citation>
    <scope>FUNCTION</scope>
    <scope>SRP1 RECYCLING</scope>
</reference>
<reference key="8">
    <citation type="journal article" date="2001" name="J. Biol. Chem.">
        <title>Proteomic analysis of nucleoporin interacting proteins.</title>
        <authorList>
            <person name="Allen N.P."/>
            <person name="Huang L."/>
            <person name="Burlingame A."/>
            <person name="Rexach M."/>
        </authorList>
    </citation>
    <scope>FUNCTION</scope>
    <scope>INTERACTION THROUGH FG REPEATS</scope>
</reference>
<reference key="9">
    <citation type="journal article" date="2001" name="J. Cell Biol.">
        <title>The nucleoporin Nup60p functions as a Gsp1p-GTP-sensitive tether for Nup2p at the nuclear pore complex.</title>
        <authorList>
            <person name="Denning D.P."/>
            <person name="Mykytka B."/>
            <person name="Allen N.P."/>
            <person name="Huang L."/>
            <person name="Burlingame A."/>
            <person name="Rexach M."/>
        </authorList>
    </citation>
    <scope>FUNCTION</scope>
    <scope>INTERACTION WITH NUP60</scope>
</reference>
<reference key="10">
    <citation type="journal article" date="2002" name="J. Biol. Chem.">
        <title>GLFG and FxFG nucleoporins bind to overlapping sites on importin-beta.</title>
        <authorList>
            <person name="Bayliss R."/>
            <person name="Littlewood T."/>
            <person name="Strawn L.A."/>
            <person name="Wente S.R."/>
            <person name="Stewart M."/>
        </authorList>
    </citation>
    <scope>FUNCTION</scope>
    <scope>STRUCTURAL BASIS OF FG REPEAT INTERACTION</scope>
</reference>
<reference key="11">
    <citation type="journal article" date="2002" name="Mol. Cell. Proteomics">
        <title>Deciphering networks of protein interactions at the nuclear pore complex.</title>
        <authorList>
            <person name="Allen N.P."/>
            <person name="Patel S.S."/>
            <person name="Huang L."/>
            <person name="Chalkley R.J."/>
            <person name="Burlingame A."/>
            <person name="Lutzmann M."/>
            <person name="Hurt E.C."/>
            <person name="Rexach M."/>
        </authorList>
    </citation>
    <scope>FUNCTION</scope>
    <scope>INTERACTION WITH KARYOPHERINS THROUGH FG REPEATS</scope>
</reference>
<reference key="12">
    <citation type="journal article" date="2002" name="J. Biol. Chem.">
        <title>Accelerating the rate of disassembly of karyopherin-cargo complexes.</title>
        <authorList>
            <person name="Gilchrist D."/>
            <person name="Mykytka B."/>
            <person name="Rexach M."/>
        </authorList>
    </citation>
    <scope>FUNCTION</scope>
    <scope>IMPORT COMPLEX DISASSEMBLY</scope>
</reference>
<reference key="13">
    <citation type="journal article" date="2003" name="J. Biol. Chem.">
        <title>A gradient of affinity for the karyopherin Kap95p along the yeast nuclear pore complex.</title>
        <authorList>
            <person name="Pyhtila B."/>
            <person name="Rexach M."/>
        </authorList>
    </citation>
    <scope>FUNCTION</scope>
    <scope>AFFINITY GRADIENT FOR KARYOPHERIN KAP95</scope>
</reference>
<reference key="14">
    <citation type="journal article" date="2003" name="Nature">
        <title>Global analysis of protein expression in yeast.</title>
        <authorList>
            <person name="Ghaemmaghami S."/>
            <person name="Huh W.-K."/>
            <person name="Bower K."/>
            <person name="Howson R.W."/>
            <person name="Belle A."/>
            <person name="Dephoure N."/>
            <person name="O'Shea E.K."/>
            <person name="Weissman J.S."/>
        </authorList>
    </citation>
    <scope>LEVEL OF PROTEIN EXPRESSION [LARGE SCALE ANALYSIS]</scope>
</reference>
<reference key="15">
    <citation type="journal article" date="2003" name="Proc. Natl. Acad. Sci. U.S.A.">
        <title>Disorder in the nuclear pore complex: the FG repeat regions of nucleoporins are natively unfolded.</title>
        <authorList>
            <person name="Denning D.P."/>
            <person name="Patel S.S."/>
            <person name="Uversky V."/>
            <person name="Fink A.L."/>
            <person name="Rexach M."/>
        </authorList>
    </citation>
    <scope>FUNCTION</scope>
    <scope>FG REPEAT STRUCTURE</scope>
</reference>
<reference key="16">
    <citation type="journal article" date="2004" name="Nat. Cell Biol.">
        <title>Minimal nuclear pore complexes define FG repeat domains essential for transport.</title>
        <authorList>
            <person name="Strawn L.A."/>
            <person name="Shen T.X."/>
            <person name="Shulga N."/>
            <person name="Goldfarb D.S."/>
            <person name="Wente S.R."/>
        </authorList>
    </citation>
    <scope>FUNCTION</scope>
    <scope>FG REPEATS IN NPC TRANSPORT</scope>
</reference>
<reference key="17">
    <citation type="journal article" date="2003" name="Dev. Cell">
        <title>Peering through the pore: nuclear pore complex structure, assembly, and function.</title>
        <authorList>
            <person name="Suntharalingam M."/>
            <person name="Wente S.R."/>
        </authorList>
    </citation>
    <scope>REVIEW</scope>
</reference>
<reference key="18">
    <citation type="journal article" date="2003" name="Nature">
        <title>Targets of the cyclin-dependent kinase Cdk1.</title>
        <authorList>
            <person name="Ubersax J.A."/>
            <person name="Woodbury E.L."/>
            <person name="Quang P.N."/>
            <person name="Paraz M."/>
            <person name="Blethrow J.D."/>
            <person name="Shah K."/>
            <person name="Shokat K.M."/>
            <person name="Morgan D.O."/>
        </authorList>
    </citation>
    <scope>PHOSPHORYLATION BY CDC28</scope>
</reference>
<reference key="19">
    <citation type="journal article" date="2007" name="J. Proteome Res.">
        <title>Large-scale phosphorylation analysis of alpha-factor-arrested Saccharomyces cerevisiae.</title>
        <authorList>
            <person name="Li X."/>
            <person name="Gerber S.A."/>
            <person name="Rudner A.D."/>
            <person name="Beausoleil S.A."/>
            <person name="Haas W."/>
            <person name="Villen J."/>
            <person name="Elias J.E."/>
            <person name="Gygi S.P."/>
        </authorList>
    </citation>
    <scope>PHOSPHORYLATION [LARGE SCALE ANALYSIS] AT SER-161</scope>
    <scope>IDENTIFICATION BY MASS SPECTROMETRY [LARGE SCALE ANALYSIS]</scope>
    <source>
        <strain>ADR376</strain>
    </source>
</reference>
<reference key="20">
    <citation type="journal article" date="2008" name="Mol. Cell. Proteomics">
        <title>A multidimensional chromatography technology for in-depth phosphoproteome analysis.</title>
        <authorList>
            <person name="Albuquerque C.P."/>
            <person name="Smolka M.B."/>
            <person name="Payne S.H."/>
            <person name="Bafna V."/>
            <person name="Eng J."/>
            <person name="Zhou H."/>
        </authorList>
    </citation>
    <scope>PHOSPHORYLATION [LARGE SCALE ANALYSIS] AT SER-54; THR-381; SER-383 AND SER-637</scope>
    <scope>IDENTIFICATION BY MASS SPECTROMETRY [LARGE SCALE ANALYSIS]</scope>
</reference>
<reference key="21">
    <citation type="journal article" date="2009" name="Science">
        <title>Global analysis of Cdk1 substrate phosphorylation sites provides insights into evolution.</title>
        <authorList>
            <person name="Holt L.J."/>
            <person name="Tuch B.B."/>
            <person name="Villen J."/>
            <person name="Johnson A.D."/>
            <person name="Gygi S.P."/>
            <person name="Morgan D.O."/>
        </authorList>
    </citation>
    <scope>IDENTIFICATION BY MASS SPECTROMETRY [LARGE SCALE ANALYSIS]</scope>
</reference>
<reference key="22">
    <citation type="journal article" date="2012" name="Proc. Natl. Acad. Sci. U.S.A.">
        <title>N-terminal acetylome analyses and functional insights of the N-terminal acetyltransferase NatB.</title>
        <authorList>
            <person name="Van Damme P."/>
            <person name="Lasa M."/>
            <person name="Polevoda B."/>
            <person name="Gazquez C."/>
            <person name="Elosegui-Artola A."/>
            <person name="Kim D.S."/>
            <person name="De Juan-Pardo E."/>
            <person name="Demeyer K."/>
            <person name="Hole K."/>
            <person name="Larrea E."/>
            <person name="Timmerman E."/>
            <person name="Prieto J."/>
            <person name="Arnesen T."/>
            <person name="Sherman F."/>
            <person name="Gevaert K."/>
            <person name="Aldabe R."/>
        </authorList>
    </citation>
    <scope>ACETYLATION [LARGE SCALE ANALYSIS] AT SER-2</scope>
    <scope>CLEAVAGE OF INITIATOR METHIONINE [LARGE SCALE ANALYSIS]</scope>
    <scope>IDENTIFICATION BY MASS SPECTROMETRY [LARGE SCALE ANALYSIS]</scope>
</reference>
<accession>P20676</accession>
<accession>D6W2F9</accession>
<comment type="function">
    <text evidence="3 4 5 6 7 8 9 10 11 13">Functions as a component of the nuclear pore complex (NPC). NPC components, collectively referred to as nucleoporins (NUPs), can play the role of both NPC structural components and of docking or interaction partners for transiently associated nuclear transport factors. Active directional transport is assured by both, a Phe-Gly (FG) repeat affinity gradient for these transport factors across the NPC and a transport cofactor concentration gradient across the nuclear envelope (GSP1 and GSP2 GTPases associated predominantly with GTP in the nucleus, with GDP in the cytoplasm). As one of the FG repeat nucleoporins NUP1 is involved in interactions with and guidance of nuclear transport receptors such as SRP1-KAP95 (importin alpha and beta) through the NPC. Like the closely related NUP2 it also plays an important role in disassembling and recycling SRP1-KAP95 to the cytoplasm after nuclear import. Upon entry of the heterotrimeric SRP1-KAP95-cargo complex in the nucleus, NUP1 binds through its C-terminus to KAP95, thus accelerating the release of KAP95 and, indirectly, of the nuclear localization signal (NLS)-containing cargo from the SRP1-KAP95-cargo complex.</text>
</comment>
<comment type="subunit">
    <text evidence="2 3 5 6 9">Component of the nuclear pore complex (NPC). NPC constitutes the exclusive means of nucleocytoplasmic transport. NPCs allow the passive diffusion of ions and small molecules and the active, nuclear transport receptor-mediated bidirectional transport of macromolecules such as proteins, RNAs, ribonucleoparticles (RNPs), and ribosomal subunits across the nuclear envelope. Due to its 8-fold rotational symmetry, all subunits are present with 8 copies or multiples thereof. Interacts through its FG repeats with nuclear transport receptors. Binds to the nuclear basket of the NPC through NUP60. Interacts with KAP122.</text>
</comment>
<comment type="interaction">
    <interactant intactId="EBI-12392">
        <id>P20676</id>
    </interactant>
    <interactant intactId="EBI-9145">
        <id>Q06142</id>
        <label>KAP95</label>
    </interactant>
    <organismsDiffer>false</organismsDiffer>
    <experiments>7</experiments>
</comment>
<comment type="subcellular location">
    <subcellularLocation>
        <location evidence="3">Nucleus</location>
        <location evidence="3">Nuclear pore complex</location>
    </subcellularLocation>
    <subcellularLocation>
        <location>Nucleus membrane</location>
        <topology>Peripheral membrane protein</topology>
        <orientation>Nucleoplasmic side</orientation>
    </subcellularLocation>
</comment>
<comment type="domain">
    <text>Contains FG repeats. FG repeats are interaction sites for karyopherins (importins, exportins) and form probably an affinity gradient, guiding the transport proteins unidirectionally with their cargo through the NPC. FG repeat regions are highly flexible and lack ordered secondary structure. The overall conservation of FG repeats regarding exact sequence, spacing, and repeat unit length is limited. FG repeat types and their physico-chemical environment change across the NPC from the nucleoplasmic to the cytoplasmic side: FXFG repeats are especially abundant in NUPs on the nucleoplasmic side (in a highly charged environment and enriched in Ser and Thr).</text>
</comment>
<comment type="PTM">
    <text evidence="14">Phosphorylated by CDC28.</text>
</comment>
<comment type="miscellaneous">
    <text evidence="12">Present with 468 molecules/cell in log phase SD medium.</text>
</comment>
<gene>
    <name type="primary">NUP1</name>
    <name type="ordered locus">YOR098C</name>
    <name type="ORF">YOR3182C</name>
</gene>
<name>NUP1_YEAST</name>
<feature type="initiator methionine" description="Removed" evidence="17">
    <location>
        <position position="1"/>
    </location>
</feature>
<feature type="chain" id="PRO_0000204902" description="Nucleoporin NUP1">
    <location>
        <begin position="2"/>
        <end position="1076"/>
    </location>
</feature>
<feature type="repeat" description="FXF 1">
    <location>
        <begin position="336"/>
        <end position="338"/>
    </location>
</feature>
<feature type="repeat" description="FXF 2">
    <location>
        <begin position="384"/>
        <end position="386"/>
    </location>
</feature>
<feature type="repeat" description="FXFG 1">
    <location>
        <begin position="406"/>
        <end position="409"/>
    </location>
</feature>
<feature type="repeat" description="FXFG 2">
    <location>
        <begin position="422"/>
        <end position="425"/>
    </location>
</feature>
<feature type="repeat" description="FXFG 3">
    <location>
        <begin position="448"/>
        <end position="451"/>
    </location>
</feature>
<feature type="repeat" description="FXFG 4">
    <location>
        <begin position="484"/>
        <end position="487"/>
    </location>
</feature>
<feature type="repeat" description="FXFG 5">
    <location>
        <begin position="510"/>
        <end position="513"/>
    </location>
</feature>
<feature type="repeat" description="FXFG 6">
    <location>
        <begin position="525"/>
        <end position="528"/>
    </location>
</feature>
<feature type="repeat" description="FXFG 7">
    <location>
        <begin position="543"/>
        <end position="546"/>
    </location>
</feature>
<feature type="repeat" description="FXFG 8">
    <location>
        <begin position="571"/>
        <end position="574"/>
    </location>
</feature>
<feature type="repeat" description="FXF 3">
    <location>
        <begin position="591"/>
        <end position="593"/>
    </location>
</feature>
<feature type="repeat" description="FXF 4">
    <location>
        <begin position="614"/>
        <end position="616"/>
    </location>
</feature>
<feature type="repeat" description="FXF 5">
    <location>
        <begin position="636"/>
        <end position="638"/>
    </location>
</feature>
<feature type="repeat" description="FXF 6">
    <location>
        <begin position="657"/>
        <end position="659"/>
    </location>
</feature>
<feature type="repeat" description="FXFG 9">
    <location>
        <begin position="671"/>
        <end position="674"/>
    </location>
</feature>
<feature type="repeat" description="FXF 7">
    <location>
        <begin position="689"/>
        <end position="691"/>
    </location>
</feature>
<feature type="repeat" description="FXFG 10">
    <location>
        <begin position="708"/>
        <end position="711"/>
    </location>
</feature>
<feature type="repeat" description="FXFG 11">
    <location>
        <begin position="727"/>
        <end position="730"/>
    </location>
</feature>
<feature type="repeat" description="FXF 8">
    <location>
        <begin position="753"/>
        <end position="755"/>
    </location>
</feature>
<feature type="repeat" description="FXFG 12">
    <location>
        <begin position="800"/>
        <end position="803"/>
    </location>
</feature>
<feature type="repeat" description="FXF 9">
    <location>
        <begin position="819"/>
        <end position="821"/>
    </location>
</feature>
<feature type="repeat" description="FXF 10">
    <location>
        <begin position="866"/>
        <end position="868"/>
    </location>
</feature>
<feature type="repeat" description="FXFG 13">
    <location>
        <begin position="885"/>
        <end position="888"/>
    </location>
</feature>
<feature type="repeat" description="FXF 11">
    <location>
        <begin position="929"/>
        <end position="931"/>
    </location>
</feature>
<feature type="repeat" description="FG 1">
    <location>
        <begin position="1008"/>
        <end position="1009"/>
    </location>
</feature>
<feature type="repeat" description="FG 2">
    <location>
        <begin position="1027"/>
        <end position="1028"/>
    </location>
</feature>
<feature type="repeat" description="FG 3">
    <location>
        <begin position="1038"/>
        <end position="1039"/>
    </location>
</feature>
<feature type="region of interest" description="Disordered" evidence="1">
    <location>
        <begin position="1"/>
        <end position="39"/>
    </location>
</feature>
<feature type="region of interest" description="Disordered" evidence="1">
    <location>
        <begin position="143"/>
        <end position="183"/>
    </location>
</feature>
<feature type="region of interest" description="Disordered" evidence="1">
    <location>
        <begin position="224"/>
        <end position="260"/>
    </location>
</feature>
<feature type="region of interest" description="Disordered" evidence="1">
    <location>
        <begin position="403"/>
        <end position="518"/>
    </location>
</feature>
<feature type="region of interest" description="Disordered" evidence="1">
    <location>
        <begin position="548"/>
        <end position="743"/>
    </location>
</feature>
<feature type="region of interest" description="Disordered" evidence="1">
    <location>
        <begin position="940"/>
        <end position="979"/>
    </location>
</feature>
<feature type="region of interest" description="Disordered" evidence="1">
    <location>
        <begin position="1025"/>
        <end position="1054"/>
    </location>
</feature>
<feature type="region of interest" description="Interaction with KAP95">
    <location>
        <begin position="1040"/>
        <end position="1076"/>
    </location>
</feature>
<feature type="compositionally biased region" description="Low complexity" evidence="1">
    <location>
        <begin position="1"/>
        <end position="11"/>
    </location>
</feature>
<feature type="compositionally biased region" description="Polar residues" evidence="1">
    <location>
        <begin position="19"/>
        <end position="30"/>
    </location>
</feature>
<feature type="compositionally biased region" description="Polar residues" evidence="1">
    <location>
        <begin position="154"/>
        <end position="170"/>
    </location>
</feature>
<feature type="compositionally biased region" description="Polar residues" evidence="1">
    <location>
        <begin position="243"/>
        <end position="260"/>
    </location>
</feature>
<feature type="compositionally biased region" description="Basic and acidic residues" evidence="1">
    <location>
        <begin position="426"/>
        <end position="439"/>
    </location>
</feature>
<feature type="compositionally biased region" description="Basic and acidic residues" evidence="1">
    <location>
        <begin position="488"/>
        <end position="505"/>
    </location>
</feature>
<feature type="compositionally biased region" description="Polar residues" evidence="1">
    <location>
        <begin position="634"/>
        <end position="649"/>
    </location>
</feature>
<feature type="compositionally biased region" description="Polar residues" evidence="1">
    <location>
        <begin position="658"/>
        <end position="667"/>
    </location>
</feature>
<feature type="compositionally biased region" description="Low complexity" evidence="1">
    <location>
        <begin position="708"/>
        <end position="723"/>
    </location>
</feature>
<feature type="compositionally biased region" description="Polar residues" evidence="1">
    <location>
        <begin position="944"/>
        <end position="964"/>
    </location>
</feature>
<feature type="compositionally biased region" description="Low complexity" evidence="1">
    <location>
        <begin position="965"/>
        <end position="979"/>
    </location>
</feature>
<feature type="compositionally biased region" description="Polar residues" evidence="1">
    <location>
        <begin position="1034"/>
        <end position="1045"/>
    </location>
</feature>
<feature type="modified residue" description="N-acetylserine" evidence="17">
    <location>
        <position position="2"/>
    </location>
</feature>
<feature type="modified residue" description="Phosphoserine" evidence="16">
    <location>
        <position position="54"/>
    </location>
</feature>
<feature type="modified residue" description="Phosphoserine" evidence="15">
    <location>
        <position position="161"/>
    </location>
</feature>
<feature type="modified residue" description="Phosphothreonine" evidence="16">
    <location>
        <position position="381"/>
    </location>
</feature>
<feature type="modified residue" description="Phosphoserine" evidence="16">
    <location>
        <position position="383"/>
    </location>
</feature>
<feature type="modified residue" description="Phosphoserine" evidence="16">
    <location>
        <position position="637"/>
    </location>
</feature>
<feature type="helix" evidence="18">
    <location>
        <begin position="1004"/>
        <end position="1007"/>
    </location>
</feature>
<feature type="turn" evidence="18">
    <location>
        <begin position="1008"/>
        <end position="1010"/>
    </location>
</feature>
<sequence length="1076" mass="113581">MSSNTSSVMSSPRVEKRSFSSTLKSFFTNPNKKRPSSKKVFSSNLSYANHLEESDVEDTLHVNKRKRVSGTSQHSDSLTQNNNNAPIIIYGTENTERPPLLPILPIQRLRLLREKQRVRNMRELGLIQSTEFPSITSSVILGSQSKSDEGGSYLCTSSTPSPIKNGSCTRQLAGKSGEDTNVGLPILKSLKNRSNRKRFHSQSKGTVWSANFEYDLSEYDAIQKKDNKDKEGNAGGDQKTSENRNNIKSSISNGNLATGPNLTSEIEDLRADINSNRLSNPQKNLLLKGPASTVAKTAPIQESFVPNSERSGTPTLKKNIEPKKDKESIVLPTVGFDFIKDNETPSKKTSPKATSSAGAVFKSSVEMGKTDKSTKTAEAPTLSFNFSQKANKTKAVDNTVPSTTLFNFGGKSDTVTSASQPFKFGKTSEKSENHTESDAPPKSTAPIFSFGKQEENGDEGDDENEPKRKRRLPVSEDTNTKPLFDFGKTGDQKETKKGESEKDASGKPSFVFGASDKQAEGTPLFTFGKKADVTSNIDSSAQFTFGKAATAKETHTKPSETPATIVKKPTFTFGQSTSENKISEGSAKPTFSFSKSEEERKSSPISNEAAKPSFSFPGKPVDVQAPTDDKTLKPTFSFTEPAQKDSSVVSEPKKPSFTFASSKTSQPKPLFSFGKSDAAKEPPGSNTSFSFTKPPANETDKRPTPPSFTFGGSTTNNTTTTSTKPSFSFGAPESMKSTASTAAANTEKLSNGFSFTKFNHNKEKSNSPTSFFDGSASSTPIPVLGKPTDATGNTTSKSAFSFGTANTNGTNASANSTSFSFNAPATGNGTTTTSNTSGTNIAGTFNVGKPDQSIASGNTNGAGSAFGFSSSGTAATGAASNQSSFNFGNNGAGGLNPFTSATSSTNANAGLFNKPPSTNAQNVNVPSAFNFTGNNSTPGGGSVFNMNGNTNANTVFAGSNNQPHQSQTPSFNTNSSFTPSTVPNINFSGLNGGITNTATNALRPSDIFGANAASGSNSNVTNPSSIFGGAGGVPTTSFGQPQSAPNQMGMGTNNGMSMGGGVMANRKIARMRHSKR</sequence>
<protein>
    <recommendedName>
        <fullName>Nucleoporin NUP1</fullName>
    </recommendedName>
    <alternativeName>
        <fullName>Nuclear pore protein NUP1</fullName>
    </alternativeName>
</protein>